<reference key="1">
    <citation type="journal article" date="2008" name="Antimicrob. Agents Chemother.">
        <title>Mutated response regulator graR is responsible for phenotypic conversion of Staphylococcus aureus from heterogeneous vancomycin-intermediate resistance to vancomycin-intermediate resistance.</title>
        <authorList>
            <person name="Neoh H.-M."/>
            <person name="Cui L."/>
            <person name="Yuzawa H."/>
            <person name="Takeuchi F."/>
            <person name="Matsuo M."/>
            <person name="Hiramatsu K."/>
        </authorList>
    </citation>
    <scope>NUCLEOTIDE SEQUENCE [LARGE SCALE GENOMIC DNA]</scope>
    <source>
        <strain>Mu3 / ATCC 700698</strain>
    </source>
</reference>
<feature type="chain" id="PRO_1000049080" description="Large ribosomal subunit protein bL20">
    <location>
        <begin position="1"/>
        <end position="118"/>
    </location>
</feature>
<gene>
    <name evidence="1" type="primary">rplT</name>
    <name type="ordered locus">SAHV_1665</name>
</gene>
<name>RL20_STAA1</name>
<sequence length="118" mass="13686">MPRVKGGTVTRARRKKTIKLAKGYFGSKHTLYKVAKQQVMKSGQYAFRDRRQRKRDFRKLWITRINAAARQHEMSYSRLMNGLKKAGIDINRKMLSEIAISDEKAFAQLVTKAKDALK</sequence>
<dbReference type="EMBL" id="AP009324">
    <property type="protein sequence ID" value="BAF78548.1"/>
    <property type="molecule type" value="Genomic_DNA"/>
</dbReference>
<dbReference type="RefSeq" id="WP_001138360.1">
    <property type="nucleotide sequence ID" value="NZ_CTYB01000017.1"/>
</dbReference>
<dbReference type="SMR" id="A7X3A1"/>
<dbReference type="GeneID" id="98346040"/>
<dbReference type="KEGG" id="saw:SAHV_1665"/>
<dbReference type="HOGENOM" id="CLU_123265_0_1_9"/>
<dbReference type="GO" id="GO:1990904">
    <property type="term" value="C:ribonucleoprotein complex"/>
    <property type="evidence" value="ECO:0007669"/>
    <property type="project" value="UniProtKB-KW"/>
</dbReference>
<dbReference type="GO" id="GO:0005840">
    <property type="term" value="C:ribosome"/>
    <property type="evidence" value="ECO:0007669"/>
    <property type="project" value="UniProtKB-KW"/>
</dbReference>
<dbReference type="GO" id="GO:0019843">
    <property type="term" value="F:rRNA binding"/>
    <property type="evidence" value="ECO:0007669"/>
    <property type="project" value="UniProtKB-UniRule"/>
</dbReference>
<dbReference type="GO" id="GO:0003735">
    <property type="term" value="F:structural constituent of ribosome"/>
    <property type="evidence" value="ECO:0007669"/>
    <property type="project" value="InterPro"/>
</dbReference>
<dbReference type="GO" id="GO:0000027">
    <property type="term" value="P:ribosomal large subunit assembly"/>
    <property type="evidence" value="ECO:0007669"/>
    <property type="project" value="UniProtKB-UniRule"/>
</dbReference>
<dbReference type="GO" id="GO:0006412">
    <property type="term" value="P:translation"/>
    <property type="evidence" value="ECO:0007669"/>
    <property type="project" value="InterPro"/>
</dbReference>
<dbReference type="CDD" id="cd07026">
    <property type="entry name" value="Ribosomal_L20"/>
    <property type="match status" value="1"/>
</dbReference>
<dbReference type="FunFam" id="1.10.1900.20:FF:000001">
    <property type="entry name" value="50S ribosomal protein L20"/>
    <property type="match status" value="1"/>
</dbReference>
<dbReference type="Gene3D" id="6.10.160.10">
    <property type="match status" value="1"/>
</dbReference>
<dbReference type="Gene3D" id="1.10.1900.20">
    <property type="entry name" value="Ribosomal protein L20"/>
    <property type="match status" value="1"/>
</dbReference>
<dbReference type="HAMAP" id="MF_00382">
    <property type="entry name" value="Ribosomal_bL20"/>
    <property type="match status" value="1"/>
</dbReference>
<dbReference type="InterPro" id="IPR005813">
    <property type="entry name" value="Ribosomal_bL20"/>
</dbReference>
<dbReference type="InterPro" id="IPR049946">
    <property type="entry name" value="RIBOSOMAL_L20_CS"/>
</dbReference>
<dbReference type="InterPro" id="IPR035566">
    <property type="entry name" value="Ribosomal_protein_bL20_C"/>
</dbReference>
<dbReference type="NCBIfam" id="TIGR01032">
    <property type="entry name" value="rplT_bact"/>
    <property type="match status" value="1"/>
</dbReference>
<dbReference type="PANTHER" id="PTHR10986">
    <property type="entry name" value="39S RIBOSOMAL PROTEIN L20"/>
    <property type="match status" value="1"/>
</dbReference>
<dbReference type="Pfam" id="PF00453">
    <property type="entry name" value="Ribosomal_L20"/>
    <property type="match status" value="1"/>
</dbReference>
<dbReference type="PRINTS" id="PR00062">
    <property type="entry name" value="RIBOSOMALL20"/>
</dbReference>
<dbReference type="SUPFAM" id="SSF74731">
    <property type="entry name" value="Ribosomal protein L20"/>
    <property type="match status" value="1"/>
</dbReference>
<dbReference type="PROSITE" id="PS00937">
    <property type="entry name" value="RIBOSOMAL_L20"/>
    <property type="match status" value="1"/>
</dbReference>
<protein>
    <recommendedName>
        <fullName evidence="1">Large ribosomal subunit protein bL20</fullName>
    </recommendedName>
    <alternativeName>
        <fullName evidence="2">50S ribosomal protein L20</fullName>
    </alternativeName>
</protein>
<comment type="function">
    <text evidence="1">Binds directly to 23S ribosomal RNA and is necessary for the in vitro assembly process of the 50S ribosomal subunit. It is not involved in the protein synthesizing functions of that subunit.</text>
</comment>
<comment type="similarity">
    <text evidence="1">Belongs to the bacterial ribosomal protein bL20 family.</text>
</comment>
<proteinExistence type="inferred from homology"/>
<evidence type="ECO:0000255" key="1">
    <source>
        <dbReference type="HAMAP-Rule" id="MF_00382"/>
    </source>
</evidence>
<evidence type="ECO:0000305" key="2"/>
<organism>
    <name type="scientific">Staphylococcus aureus (strain Mu3 / ATCC 700698)</name>
    <dbReference type="NCBI Taxonomy" id="418127"/>
    <lineage>
        <taxon>Bacteria</taxon>
        <taxon>Bacillati</taxon>
        <taxon>Bacillota</taxon>
        <taxon>Bacilli</taxon>
        <taxon>Bacillales</taxon>
        <taxon>Staphylococcaceae</taxon>
        <taxon>Staphylococcus</taxon>
    </lineage>
</organism>
<keyword id="KW-0687">Ribonucleoprotein</keyword>
<keyword id="KW-0689">Ribosomal protein</keyword>
<keyword id="KW-0694">RNA-binding</keyword>
<keyword id="KW-0699">rRNA-binding</keyword>
<accession>A7X3A1</accession>